<accession>Q6CC84</accession>
<proteinExistence type="inferred from homology"/>
<comment type="function">
    <text evidence="1">The SPT4-SPT5 complex mediates both activation and inhibition of transcription elongation, and plays a role in pre-mRNA processing. This complex seems to be important for the stability of the RNA polymerase II elongation machinery on the chromatin template but not for the inherent ability of this machinery to translocate down the gene (By similarity).</text>
</comment>
<comment type="subunit">
    <text evidence="1">Component of the SPT4-SPT5 complex. Interacts with RNA polymerase II (By similarity).</text>
</comment>
<comment type="subcellular location">
    <subcellularLocation>
        <location evidence="1">Nucleus</location>
    </subcellularLocation>
</comment>
<comment type="similarity">
    <text evidence="3">Belongs to the SPT5 family.</text>
</comment>
<protein>
    <recommendedName>
        <fullName>Transcription elongation factor SPT5</fullName>
    </recommendedName>
    <alternativeName>
        <fullName>Chromatin elongation factor SPT5</fullName>
    </alternativeName>
</protein>
<dbReference type="EMBL" id="CR382129">
    <property type="protein sequence ID" value="CAG82038.1"/>
    <property type="molecule type" value="Genomic_DNA"/>
</dbReference>
<dbReference type="RefSeq" id="XP_501728.1">
    <property type="nucleotide sequence ID" value="XM_501728.1"/>
</dbReference>
<dbReference type="SMR" id="Q6CC84"/>
<dbReference type="FunCoup" id="Q6CC84">
    <property type="interactions" value="1341"/>
</dbReference>
<dbReference type="STRING" id="284591.Q6CC84"/>
<dbReference type="EnsemblFungi" id="CAG82038">
    <property type="protein sequence ID" value="CAG82038"/>
    <property type="gene ID" value="YALI0_C11561g"/>
</dbReference>
<dbReference type="KEGG" id="yli:2909431"/>
<dbReference type="VEuPathDB" id="FungiDB:YALI0_C11561g"/>
<dbReference type="HOGENOM" id="CLU_003537_1_0_1"/>
<dbReference type="InParanoid" id="Q6CC84"/>
<dbReference type="OMA" id="YPVGYMN"/>
<dbReference type="OrthoDB" id="2539at4891"/>
<dbReference type="Proteomes" id="UP000001300">
    <property type="component" value="Chromosome C"/>
</dbReference>
<dbReference type="GO" id="GO:0032044">
    <property type="term" value="C:DSIF complex"/>
    <property type="evidence" value="ECO:0000318"/>
    <property type="project" value="GO_Central"/>
</dbReference>
<dbReference type="GO" id="GO:0140463">
    <property type="term" value="F:chromatin-protein adaptor activity"/>
    <property type="evidence" value="ECO:0007669"/>
    <property type="project" value="EnsemblFungi"/>
</dbReference>
<dbReference type="GO" id="GO:0003729">
    <property type="term" value="F:mRNA binding"/>
    <property type="evidence" value="ECO:0000318"/>
    <property type="project" value="GO_Central"/>
</dbReference>
<dbReference type="GO" id="GO:0003711">
    <property type="term" value="F:transcription elongation factor activity"/>
    <property type="evidence" value="ECO:0007669"/>
    <property type="project" value="EnsemblFungi"/>
</dbReference>
<dbReference type="GO" id="GO:0006397">
    <property type="term" value="P:mRNA processing"/>
    <property type="evidence" value="ECO:0007669"/>
    <property type="project" value="UniProtKB-KW"/>
</dbReference>
<dbReference type="GO" id="GO:0032784">
    <property type="term" value="P:regulation of DNA-templated transcription elongation"/>
    <property type="evidence" value="ECO:0007669"/>
    <property type="project" value="InterPro"/>
</dbReference>
<dbReference type="GO" id="GO:0006357">
    <property type="term" value="P:regulation of transcription by RNA polymerase II"/>
    <property type="evidence" value="ECO:0007669"/>
    <property type="project" value="InterPro"/>
</dbReference>
<dbReference type="GO" id="GO:0006368">
    <property type="term" value="P:transcription elongation by RNA polymerase II"/>
    <property type="evidence" value="ECO:0000318"/>
    <property type="project" value="GO_Central"/>
</dbReference>
<dbReference type="CDD" id="cd06081">
    <property type="entry name" value="KOW_Spt5_1"/>
    <property type="match status" value="1"/>
</dbReference>
<dbReference type="CDD" id="cd06082">
    <property type="entry name" value="KOW_Spt5_2"/>
    <property type="match status" value="1"/>
</dbReference>
<dbReference type="CDD" id="cd06083">
    <property type="entry name" value="KOW_Spt5_3"/>
    <property type="match status" value="1"/>
</dbReference>
<dbReference type="CDD" id="cd06084">
    <property type="entry name" value="KOW_Spt5_4"/>
    <property type="match status" value="1"/>
</dbReference>
<dbReference type="CDD" id="cd06085">
    <property type="entry name" value="KOW_Spt5_5"/>
    <property type="match status" value="1"/>
</dbReference>
<dbReference type="CDD" id="cd09888">
    <property type="entry name" value="NGN_Euk"/>
    <property type="match status" value="1"/>
</dbReference>
<dbReference type="FunFam" id="2.30.30.30:FF:000029">
    <property type="entry name" value="Transcription elongation factor SPT5"/>
    <property type="match status" value="1"/>
</dbReference>
<dbReference type="FunFam" id="3.30.70.940:FF:000005">
    <property type="entry name" value="Transcription elongation factor SPT5"/>
    <property type="match status" value="1"/>
</dbReference>
<dbReference type="Gene3D" id="2.30.30.30">
    <property type="match status" value="3"/>
</dbReference>
<dbReference type="Gene3D" id="3.30.70.940">
    <property type="entry name" value="NusG, N-terminal domain"/>
    <property type="match status" value="1"/>
</dbReference>
<dbReference type="InterPro" id="IPR005824">
    <property type="entry name" value="KOW"/>
</dbReference>
<dbReference type="InterPro" id="IPR041973">
    <property type="entry name" value="KOW_Spt5_1"/>
</dbReference>
<dbReference type="InterPro" id="IPR041975">
    <property type="entry name" value="KOW_Spt5_2"/>
</dbReference>
<dbReference type="InterPro" id="IPR041976">
    <property type="entry name" value="KOW_Spt5_3"/>
</dbReference>
<dbReference type="InterPro" id="IPR041977">
    <property type="entry name" value="KOW_Spt5_4"/>
</dbReference>
<dbReference type="InterPro" id="IPR041978">
    <property type="entry name" value="KOW_Spt5_5"/>
</dbReference>
<dbReference type="InterPro" id="IPR005100">
    <property type="entry name" value="NGN-domain"/>
</dbReference>
<dbReference type="InterPro" id="IPR036735">
    <property type="entry name" value="NGN_dom_sf"/>
</dbReference>
<dbReference type="InterPro" id="IPR039385">
    <property type="entry name" value="NGN_Euk"/>
</dbReference>
<dbReference type="InterPro" id="IPR014722">
    <property type="entry name" value="Rib_uL2_dom2"/>
</dbReference>
<dbReference type="InterPro" id="IPR039659">
    <property type="entry name" value="SPT5"/>
</dbReference>
<dbReference type="InterPro" id="IPR024945">
    <property type="entry name" value="Spt5_C_dom"/>
</dbReference>
<dbReference type="InterPro" id="IPR022581">
    <property type="entry name" value="Spt5_N"/>
</dbReference>
<dbReference type="InterPro" id="IPR017071">
    <property type="entry name" value="TF_Spt5_eukaryote"/>
</dbReference>
<dbReference type="InterPro" id="IPR008991">
    <property type="entry name" value="Translation_prot_SH3-like_sf"/>
</dbReference>
<dbReference type="PANTHER" id="PTHR11125">
    <property type="entry name" value="SUPPRESSOR OF TY 5"/>
    <property type="match status" value="1"/>
</dbReference>
<dbReference type="PANTHER" id="PTHR11125:SF7">
    <property type="entry name" value="TRANSCRIPTION ELONGATION FACTOR SPT5"/>
    <property type="match status" value="1"/>
</dbReference>
<dbReference type="Pfam" id="PF12815">
    <property type="entry name" value="CTD"/>
    <property type="match status" value="2"/>
</dbReference>
<dbReference type="Pfam" id="PF23042">
    <property type="entry name" value="KOW1_SPT5"/>
    <property type="match status" value="1"/>
</dbReference>
<dbReference type="Pfam" id="PF23284">
    <property type="entry name" value="KOW2_Spt5"/>
    <property type="match status" value="1"/>
</dbReference>
<dbReference type="Pfam" id="PF23291">
    <property type="entry name" value="KOW4_SPT5"/>
    <property type="match status" value="1"/>
</dbReference>
<dbReference type="Pfam" id="PF23290">
    <property type="entry name" value="KOW5_SPT5"/>
    <property type="match status" value="1"/>
</dbReference>
<dbReference type="Pfam" id="PF23037">
    <property type="entry name" value="KOWx_SPT5"/>
    <property type="match status" value="1"/>
</dbReference>
<dbReference type="Pfam" id="PF03439">
    <property type="entry name" value="Spt5-NGN"/>
    <property type="match status" value="1"/>
</dbReference>
<dbReference type="Pfam" id="PF11942">
    <property type="entry name" value="Spt5_N"/>
    <property type="match status" value="1"/>
</dbReference>
<dbReference type="PIRSF" id="PIRSF036945">
    <property type="entry name" value="Spt5"/>
    <property type="match status" value="1"/>
</dbReference>
<dbReference type="SMART" id="SM01104">
    <property type="entry name" value="CTD"/>
    <property type="match status" value="1"/>
</dbReference>
<dbReference type="SMART" id="SM00739">
    <property type="entry name" value="KOW"/>
    <property type="match status" value="4"/>
</dbReference>
<dbReference type="SUPFAM" id="SSF50104">
    <property type="entry name" value="Translation proteins SH3-like domain"/>
    <property type="match status" value="1"/>
</dbReference>
<gene>
    <name type="primary">SPT5</name>
    <name type="ordered locus">YALI0C11561g</name>
</gene>
<organism>
    <name type="scientific">Yarrowia lipolytica (strain CLIB 122 / E 150)</name>
    <name type="common">Yeast</name>
    <name type="synonym">Candida lipolytica</name>
    <dbReference type="NCBI Taxonomy" id="284591"/>
    <lineage>
        <taxon>Eukaryota</taxon>
        <taxon>Fungi</taxon>
        <taxon>Dikarya</taxon>
        <taxon>Ascomycota</taxon>
        <taxon>Saccharomycotina</taxon>
        <taxon>Dipodascomycetes</taxon>
        <taxon>Dipodascales</taxon>
        <taxon>Dipodascales incertae sedis</taxon>
        <taxon>Yarrowia</taxon>
    </lineage>
</organism>
<name>SPT5_YARLI</name>
<feature type="chain" id="PRO_0000238567" description="Transcription elongation factor SPT5">
    <location>
        <begin position="1"/>
        <end position="980"/>
    </location>
</feature>
<feature type="region of interest" description="Disordered" evidence="2">
    <location>
        <begin position="1"/>
        <end position="120"/>
    </location>
</feature>
<feature type="region of interest" description="Disordered" evidence="2">
    <location>
        <begin position="751"/>
        <end position="980"/>
    </location>
</feature>
<feature type="compositionally biased region" description="Basic and acidic residues" evidence="2">
    <location>
        <begin position="1"/>
        <end position="17"/>
    </location>
</feature>
<feature type="compositionally biased region" description="Basic and acidic residues" evidence="2">
    <location>
        <begin position="25"/>
        <end position="39"/>
    </location>
</feature>
<feature type="compositionally biased region" description="Acidic residues" evidence="2">
    <location>
        <begin position="40"/>
        <end position="65"/>
    </location>
</feature>
<feature type="compositionally biased region" description="Acidic residues" evidence="2">
    <location>
        <begin position="83"/>
        <end position="102"/>
    </location>
</feature>
<feature type="compositionally biased region" description="Gly residues" evidence="2">
    <location>
        <begin position="770"/>
        <end position="793"/>
    </location>
</feature>
<feature type="compositionally biased region" description="Polar residues" evidence="2">
    <location>
        <begin position="797"/>
        <end position="815"/>
    </location>
</feature>
<feature type="compositionally biased region" description="Polar residues" evidence="2">
    <location>
        <begin position="836"/>
        <end position="846"/>
    </location>
</feature>
<feature type="compositionally biased region" description="Low complexity" evidence="2">
    <location>
        <begin position="880"/>
        <end position="891"/>
    </location>
</feature>
<feature type="compositionally biased region" description="Low complexity" evidence="2">
    <location>
        <begin position="905"/>
        <end position="916"/>
    </location>
</feature>
<feature type="compositionally biased region" description="Basic and acidic residues" evidence="2">
    <location>
        <begin position="970"/>
        <end position="980"/>
    </location>
</feature>
<sequence length="980" mass="106379">MSDREESGSPEPRSKIEEDLESDEEVKTIKSEEVDKTQDNVEDEDDEEEEEEEEEEEEEDDDEEDVRQRKKPRRERRNQFLDVEAEVDEDEEDLEEDEDGLIGEDGFVAEPDADEPDASDDRFHREMDRRREAIAEEDAERLADEYREKYGRSTANKYRGDSGVIPQHLLLPSVNEPSIWGIRCKPGKEKELVRQCLRKKLSLQKSRNPLEIMSVFQRDTFTGYIYMEARNQQAVTVALKGLVNVYPQNMILVPIKEYVDLLRATKSAETELVPGAYVRLKRGKYGGDLAIVENLSENGLEVRLKLVPRLDYGRNAEAGIDGKRKRVARIPPPRLFSEQEASQYDPRNLQKRGPNAYVYAGDEYIGGFLYKDFKITLVNAENVAPKLEELTRFNSEETDGIDLASLAQSLRKSAAAVQFQGGDVVEVSEGEQTGVQGTVISTHGDIVTVEATTAPLVGKRIDLPSRSLRKKFAIGDHVRVISGNFLDDTGLIVGLEDDSVTLLSDLNKKEVTVFAKDLKKVSDIGGSHQVGDYELHDFVQLDALHVGCIVKVERDSLKVLDQEGTVRSVTPSSITMKLTRNMEGLATDSNGSEIKIGDTVRETVGEGRQGAVLHIYKNTLFLSSRSLGVFVAKAFKVNTIVAKGARTQSNSQATGPDLTKMNPAVYNARPGQMAPPVMPKQGGFDRLKGKHVAIGPGSQHKGCKGIVKETTDDIARVELHAPCKVVNVLKHQLRIYDDYKKTYLSYMEFATPRGMRSGGGRPGGPPGPGGPGSGGQTPSWGGGGKTPSWGAGGKTPSWGSKTPSWGGAKTSSWGSRTPAANAGGAQTPAWGAMGNKTPSWGASESRTPAWGGAKTPAWGAAGAGSKTPAFGVARTPSWKSSSAGTYGGSSSRNKGWEDLGSGNSAPTPGYAAATPGEMMGAPTPGAAHHPWEDSAPTPAAYNDARTPGVYDPRGSGPAQAETPAAWSTDDAPRYDDSPTP</sequence>
<keyword id="KW-0507">mRNA processing</keyword>
<keyword id="KW-0539">Nucleus</keyword>
<keyword id="KW-1185">Reference proteome</keyword>
<keyword id="KW-0804">Transcription</keyword>
<reference key="1">
    <citation type="journal article" date="2004" name="Nature">
        <title>Genome evolution in yeasts.</title>
        <authorList>
            <person name="Dujon B."/>
            <person name="Sherman D."/>
            <person name="Fischer G."/>
            <person name="Durrens P."/>
            <person name="Casaregola S."/>
            <person name="Lafontaine I."/>
            <person name="de Montigny J."/>
            <person name="Marck C."/>
            <person name="Neuveglise C."/>
            <person name="Talla E."/>
            <person name="Goffard N."/>
            <person name="Frangeul L."/>
            <person name="Aigle M."/>
            <person name="Anthouard V."/>
            <person name="Babour A."/>
            <person name="Barbe V."/>
            <person name="Barnay S."/>
            <person name="Blanchin S."/>
            <person name="Beckerich J.-M."/>
            <person name="Beyne E."/>
            <person name="Bleykasten C."/>
            <person name="Boisrame A."/>
            <person name="Boyer J."/>
            <person name="Cattolico L."/>
            <person name="Confanioleri F."/>
            <person name="de Daruvar A."/>
            <person name="Despons L."/>
            <person name="Fabre E."/>
            <person name="Fairhead C."/>
            <person name="Ferry-Dumazet H."/>
            <person name="Groppi A."/>
            <person name="Hantraye F."/>
            <person name="Hennequin C."/>
            <person name="Jauniaux N."/>
            <person name="Joyet P."/>
            <person name="Kachouri R."/>
            <person name="Kerrest A."/>
            <person name="Koszul R."/>
            <person name="Lemaire M."/>
            <person name="Lesur I."/>
            <person name="Ma L."/>
            <person name="Muller H."/>
            <person name="Nicaud J.-M."/>
            <person name="Nikolski M."/>
            <person name="Oztas S."/>
            <person name="Ozier-Kalogeropoulos O."/>
            <person name="Pellenz S."/>
            <person name="Potier S."/>
            <person name="Richard G.-F."/>
            <person name="Straub M.-L."/>
            <person name="Suleau A."/>
            <person name="Swennen D."/>
            <person name="Tekaia F."/>
            <person name="Wesolowski-Louvel M."/>
            <person name="Westhof E."/>
            <person name="Wirth B."/>
            <person name="Zeniou-Meyer M."/>
            <person name="Zivanovic Y."/>
            <person name="Bolotin-Fukuhara M."/>
            <person name="Thierry A."/>
            <person name="Bouchier C."/>
            <person name="Caudron B."/>
            <person name="Scarpelli C."/>
            <person name="Gaillardin C."/>
            <person name="Weissenbach J."/>
            <person name="Wincker P."/>
            <person name="Souciet J.-L."/>
        </authorList>
    </citation>
    <scope>NUCLEOTIDE SEQUENCE [LARGE SCALE GENOMIC DNA]</scope>
    <source>
        <strain>CLIB 122 / E 150</strain>
    </source>
</reference>
<evidence type="ECO:0000250" key="1"/>
<evidence type="ECO:0000256" key="2">
    <source>
        <dbReference type="SAM" id="MobiDB-lite"/>
    </source>
</evidence>
<evidence type="ECO:0000305" key="3"/>